<organism>
    <name type="scientific">Escherichia coli O17:K52:H18 (strain UMN026 / ExPEC)</name>
    <dbReference type="NCBI Taxonomy" id="585056"/>
    <lineage>
        <taxon>Bacteria</taxon>
        <taxon>Pseudomonadati</taxon>
        <taxon>Pseudomonadota</taxon>
        <taxon>Gammaproteobacteria</taxon>
        <taxon>Enterobacterales</taxon>
        <taxon>Enterobacteriaceae</taxon>
        <taxon>Escherichia</taxon>
    </lineage>
</organism>
<reference key="1">
    <citation type="journal article" date="2009" name="PLoS Genet.">
        <title>Organised genome dynamics in the Escherichia coli species results in highly diverse adaptive paths.</title>
        <authorList>
            <person name="Touchon M."/>
            <person name="Hoede C."/>
            <person name="Tenaillon O."/>
            <person name="Barbe V."/>
            <person name="Baeriswyl S."/>
            <person name="Bidet P."/>
            <person name="Bingen E."/>
            <person name="Bonacorsi S."/>
            <person name="Bouchier C."/>
            <person name="Bouvet O."/>
            <person name="Calteau A."/>
            <person name="Chiapello H."/>
            <person name="Clermont O."/>
            <person name="Cruveiller S."/>
            <person name="Danchin A."/>
            <person name="Diard M."/>
            <person name="Dossat C."/>
            <person name="Karoui M.E."/>
            <person name="Frapy E."/>
            <person name="Garry L."/>
            <person name="Ghigo J.M."/>
            <person name="Gilles A.M."/>
            <person name="Johnson J."/>
            <person name="Le Bouguenec C."/>
            <person name="Lescat M."/>
            <person name="Mangenot S."/>
            <person name="Martinez-Jehanne V."/>
            <person name="Matic I."/>
            <person name="Nassif X."/>
            <person name="Oztas S."/>
            <person name="Petit M.A."/>
            <person name="Pichon C."/>
            <person name="Rouy Z."/>
            <person name="Ruf C.S."/>
            <person name="Schneider D."/>
            <person name="Tourret J."/>
            <person name="Vacherie B."/>
            <person name="Vallenet D."/>
            <person name="Medigue C."/>
            <person name="Rocha E.P.C."/>
            <person name="Denamur E."/>
        </authorList>
    </citation>
    <scope>NUCLEOTIDE SEQUENCE [LARGE SCALE GENOMIC DNA]</scope>
    <source>
        <strain>UMN026 / ExPEC</strain>
    </source>
</reference>
<name>YBIX_ECOLU</name>
<evidence type="ECO:0000255" key="1">
    <source>
        <dbReference type="HAMAP-Rule" id="MF_00657"/>
    </source>
</evidence>
<proteinExistence type="inferred from homology"/>
<gene>
    <name evidence="1" type="primary">ybiX</name>
    <name type="ordered locus">ECUMN_0948</name>
</gene>
<keyword id="KW-0223">Dioxygenase</keyword>
<keyword id="KW-0408">Iron</keyword>
<keyword id="KW-0479">Metal-binding</keyword>
<keyword id="KW-0560">Oxidoreductase</keyword>
<keyword id="KW-0847">Vitamin C</keyword>
<dbReference type="EC" id="1.14.11.-" evidence="1"/>
<dbReference type="EMBL" id="CU928163">
    <property type="protein sequence ID" value="CAR12157.1"/>
    <property type="molecule type" value="Genomic_DNA"/>
</dbReference>
<dbReference type="RefSeq" id="WP_000990140.1">
    <property type="nucleotide sequence ID" value="NC_011751.1"/>
</dbReference>
<dbReference type="RefSeq" id="YP_002411701.1">
    <property type="nucleotide sequence ID" value="NC_011751.1"/>
</dbReference>
<dbReference type="SMR" id="B7NAA4"/>
<dbReference type="STRING" id="585056.ECUMN_0948"/>
<dbReference type="KEGG" id="eum:ECUMN_0948"/>
<dbReference type="PATRIC" id="fig|585056.7.peg.1143"/>
<dbReference type="HOGENOM" id="CLU_106663_0_0_6"/>
<dbReference type="Proteomes" id="UP000007097">
    <property type="component" value="Chromosome"/>
</dbReference>
<dbReference type="GO" id="GO:0016706">
    <property type="term" value="F:2-oxoglutarate-dependent dioxygenase activity"/>
    <property type="evidence" value="ECO:0007669"/>
    <property type="project" value="UniProtKB-UniRule"/>
</dbReference>
<dbReference type="GO" id="GO:0005506">
    <property type="term" value="F:iron ion binding"/>
    <property type="evidence" value="ECO:0007669"/>
    <property type="project" value="UniProtKB-UniRule"/>
</dbReference>
<dbReference type="GO" id="GO:0031418">
    <property type="term" value="F:L-ascorbic acid binding"/>
    <property type="evidence" value="ECO:0007669"/>
    <property type="project" value="UniProtKB-KW"/>
</dbReference>
<dbReference type="GO" id="GO:0006974">
    <property type="term" value="P:DNA damage response"/>
    <property type="evidence" value="ECO:0007669"/>
    <property type="project" value="TreeGrafter"/>
</dbReference>
<dbReference type="GO" id="GO:0006879">
    <property type="term" value="P:intracellular iron ion homeostasis"/>
    <property type="evidence" value="ECO:0007669"/>
    <property type="project" value="TreeGrafter"/>
</dbReference>
<dbReference type="FunFam" id="2.60.120.620:FF:000006">
    <property type="entry name" value="PKHD-type hydroxylase YbiX"/>
    <property type="match status" value="1"/>
</dbReference>
<dbReference type="FunFam" id="4.10.860.20:FF:000001">
    <property type="entry name" value="PKHD-type hydroxylase YbiX"/>
    <property type="match status" value="1"/>
</dbReference>
<dbReference type="Gene3D" id="2.60.120.620">
    <property type="entry name" value="q2cbj1_9rhob like domain"/>
    <property type="match status" value="1"/>
</dbReference>
<dbReference type="Gene3D" id="4.10.860.20">
    <property type="entry name" value="Rabenosyn, Rab binding domain"/>
    <property type="match status" value="1"/>
</dbReference>
<dbReference type="HAMAP" id="MF_00657">
    <property type="entry name" value="Hydroxyl_YbiX"/>
    <property type="match status" value="1"/>
</dbReference>
<dbReference type="InterPro" id="IPR005123">
    <property type="entry name" value="Oxoglu/Fe-dep_dioxygenase_dom"/>
</dbReference>
<dbReference type="InterPro" id="IPR041097">
    <property type="entry name" value="PKHD_C"/>
</dbReference>
<dbReference type="InterPro" id="IPR023550">
    <property type="entry name" value="PKHD_hydroxylase"/>
</dbReference>
<dbReference type="InterPro" id="IPR006620">
    <property type="entry name" value="Pro_4_hyd_alph"/>
</dbReference>
<dbReference type="InterPro" id="IPR044862">
    <property type="entry name" value="Pro_4_hyd_alph_FE2OG_OXY"/>
</dbReference>
<dbReference type="NCBIfam" id="NF003972">
    <property type="entry name" value="PRK05467.1-1"/>
    <property type="match status" value="1"/>
</dbReference>
<dbReference type="NCBIfam" id="NF003974">
    <property type="entry name" value="PRK05467.1-3"/>
    <property type="match status" value="1"/>
</dbReference>
<dbReference type="NCBIfam" id="NF003975">
    <property type="entry name" value="PRK05467.1-4"/>
    <property type="match status" value="1"/>
</dbReference>
<dbReference type="PANTHER" id="PTHR41536">
    <property type="entry name" value="PKHD-TYPE HYDROXYLASE YBIX"/>
    <property type="match status" value="1"/>
</dbReference>
<dbReference type="PANTHER" id="PTHR41536:SF1">
    <property type="entry name" value="PKHD-TYPE HYDROXYLASE YBIX"/>
    <property type="match status" value="1"/>
</dbReference>
<dbReference type="Pfam" id="PF13640">
    <property type="entry name" value="2OG-FeII_Oxy_3"/>
    <property type="match status" value="1"/>
</dbReference>
<dbReference type="Pfam" id="PF18331">
    <property type="entry name" value="PKHD_C"/>
    <property type="match status" value="1"/>
</dbReference>
<dbReference type="SMART" id="SM00702">
    <property type="entry name" value="P4Hc"/>
    <property type="match status" value="1"/>
</dbReference>
<dbReference type="SUPFAM" id="SSF51197">
    <property type="entry name" value="Clavaminate synthase-like"/>
    <property type="match status" value="1"/>
</dbReference>
<dbReference type="PROSITE" id="PS51471">
    <property type="entry name" value="FE2OG_OXY"/>
    <property type="match status" value="1"/>
</dbReference>
<protein>
    <recommendedName>
        <fullName evidence="1">PKHD-type hydroxylase YbiX</fullName>
        <ecNumber evidence="1">1.14.11.-</ecNumber>
    </recommendedName>
</protein>
<feature type="chain" id="PRO_1000131213" description="PKHD-type hydroxylase YbiX">
    <location>
        <begin position="1"/>
        <end position="225"/>
    </location>
</feature>
<feature type="domain" description="Fe2OG dioxygenase" evidence="1">
    <location>
        <begin position="78"/>
        <end position="177"/>
    </location>
</feature>
<feature type="binding site" evidence="1">
    <location>
        <position position="96"/>
    </location>
    <ligand>
        <name>Fe cation</name>
        <dbReference type="ChEBI" id="CHEBI:24875"/>
    </ligand>
</feature>
<feature type="binding site" evidence="1">
    <location>
        <position position="98"/>
    </location>
    <ligand>
        <name>Fe cation</name>
        <dbReference type="ChEBI" id="CHEBI:24875"/>
    </ligand>
</feature>
<feature type="binding site" evidence="1">
    <location>
        <position position="158"/>
    </location>
    <ligand>
        <name>Fe cation</name>
        <dbReference type="ChEBI" id="CHEBI:24875"/>
    </ligand>
</feature>
<feature type="binding site" evidence="1">
    <location>
        <position position="168"/>
    </location>
    <ligand>
        <name>2-oxoglutarate</name>
        <dbReference type="ChEBI" id="CHEBI:16810"/>
    </ligand>
</feature>
<comment type="cofactor">
    <cofactor evidence="1">
        <name>Fe(2+)</name>
        <dbReference type="ChEBI" id="CHEBI:29033"/>
    </cofactor>
    <text evidence="1">Binds 1 Fe(2+) ion per subunit.</text>
</comment>
<comment type="cofactor">
    <cofactor evidence="1">
        <name>L-ascorbate</name>
        <dbReference type="ChEBI" id="CHEBI:38290"/>
    </cofactor>
</comment>
<accession>B7NAA4</accession>
<sequence length="225" mass="25466">MMYHIPGVLSPKDVARFREQLEQAEWVDGRVTTGAQGAQVKNNQQVDTRSALYAALQNEVLNAVNQHALFFAAALPHTLSTPLFNRYQNNETYGFHVDGAVRSHPQNGWMRTDLSATLFLSDPQSYDGGELVVNDTFGQHRVKLPAGDLVLYPSSSLHCVTPVTRGVRVASFMWIQSMIRDDKKRAMLFDLDNNIQSLKSRYGESEEILSLLNLYHNLLREWSEI</sequence>